<accession>Q30KT5</accession>
<name>DB119_CANLF</name>
<keyword id="KW-0044">Antibiotic</keyword>
<keyword id="KW-0929">Antimicrobial</keyword>
<keyword id="KW-0211">Defensin</keyword>
<keyword id="KW-1015">Disulfide bond</keyword>
<keyword id="KW-1185">Reference proteome</keyword>
<keyword id="KW-0964">Secreted</keyword>
<keyword id="KW-0732">Signal</keyword>
<protein>
    <recommendedName>
        <fullName>Beta-defensin 119</fullName>
    </recommendedName>
    <alternativeName>
        <fullName>Defensin, beta 119</fullName>
    </alternativeName>
</protein>
<proteinExistence type="inferred from homology"/>
<dbReference type="EMBL" id="DQ011988">
    <property type="protein sequence ID" value="AAY59725.1"/>
    <property type="molecule type" value="mRNA"/>
</dbReference>
<dbReference type="RefSeq" id="XP_038288697.1">
    <property type="nucleotide sequence ID" value="XM_038432769.1"/>
</dbReference>
<dbReference type="STRING" id="9615.ENSCAFP00000034531"/>
<dbReference type="PaxDb" id="9615-ENSCAFP00000034531"/>
<dbReference type="Ensembl" id="ENSCAFT00000108341.1">
    <property type="protein sequence ID" value="ENSCAFP00000068092.1"/>
    <property type="gene ID" value="ENSCAFG00000052287.1"/>
</dbReference>
<dbReference type="Ensembl" id="ENSCAFT00030015062.1">
    <property type="protein sequence ID" value="ENSCAFP00030013129.1"/>
    <property type="gene ID" value="ENSCAFG00030008221.1"/>
</dbReference>
<dbReference type="Ensembl" id="ENSCAFT00040039145.1">
    <property type="protein sequence ID" value="ENSCAFP00040034137.1"/>
    <property type="gene ID" value="ENSCAFG00040021114.1"/>
</dbReference>
<dbReference type="Ensembl" id="ENSCAFT00845031594.1">
    <property type="protein sequence ID" value="ENSCAFP00845024731.1"/>
    <property type="gene ID" value="ENSCAFG00845017855.1"/>
</dbReference>
<dbReference type="GeneID" id="100683811"/>
<dbReference type="VEuPathDB" id="HostDB:ENSCAFG00845017855"/>
<dbReference type="GeneTree" id="ENSGT00510000050451"/>
<dbReference type="HOGENOM" id="CLU_193927_0_0_1"/>
<dbReference type="InParanoid" id="Q30KT5"/>
<dbReference type="OrthoDB" id="9624411at2759"/>
<dbReference type="Reactome" id="R-CFA-1461973">
    <property type="pathway name" value="Defensins"/>
</dbReference>
<dbReference type="Proteomes" id="UP000002254">
    <property type="component" value="Chromosome 24"/>
</dbReference>
<dbReference type="Proteomes" id="UP000694429">
    <property type="component" value="Chromosome 24"/>
</dbReference>
<dbReference type="Proteomes" id="UP000694542">
    <property type="component" value="Chromosome 24"/>
</dbReference>
<dbReference type="Proteomes" id="UP000805418">
    <property type="component" value="Chromosome 24"/>
</dbReference>
<dbReference type="Bgee" id="ENSCAFG00000006989">
    <property type="expression patterns" value="Expressed in testis and 4 other cell types or tissues"/>
</dbReference>
<dbReference type="GO" id="GO:0005576">
    <property type="term" value="C:extracellular region"/>
    <property type="evidence" value="ECO:0007669"/>
    <property type="project" value="UniProtKB-SubCell"/>
</dbReference>
<dbReference type="GO" id="GO:0050829">
    <property type="term" value="P:defense response to Gram-negative bacterium"/>
    <property type="evidence" value="ECO:0007669"/>
    <property type="project" value="InterPro"/>
</dbReference>
<dbReference type="GO" id="GO:0050830">
    <property type="term" value="P:defense response to Gram-positive bacterium"/>
    <property type="evidence" value="ECO:0007669"/>
    <property type="project" value="InterPro"/>
</dbReference>
<dbReference type="InterPro" id="IPR028060">
    <property type="entry name" value="Defensin_big_dom"/>
</dbReference>
<dbReference type="PANTHER" id="PTHR47902">
    <property type="entry name" value="BETA-DEFENSIN 119"/>
    <property type="match status" value="1"/>
</dbReference>
<dbReference type="PANTHER" id="PTHR47902:SF1">
    <property type="entry name" value="BETA-DEFENSIN 119"/>
    <property type="match status" value="1"/>
</dbReference>
<dbReference type="Pfam" id="PF14862">
    <property type="entry name" value="Defensin_big"/>
    <property type="match status" value="1"/>
</dbReference>
<feature type="signal peptide" evidence="2">
    <location>
        <begin position="1"/>
        <end position="19"/>
    </location>
</feature>
<feature type="peptide" id="PRO_0000285788" description="Beta-defensin 119">
    <location>
        <begin position="20"/>
        <end position="82"/>
    </location>
</feature>
<feature type="disulfide bond" evidence="1">
    <location>
        <begin position="26"/>
        <end position="53"/>
    </location>
</feature>
<feature type="disulfide bond" evidence="1">
    <location>
        <begin position="33"/>
        <end position="47"/>
    </location>
</feature>
<feature type="disulfide bond" evidence="1">
    <location>
        <begin position="37"/>
        <end position="54"/>
    </location>
</feature>
<organism>
    <name type="scientific">Canis lupus familiaris</name>
    <name type="common">Dog</name>
    <name type="synonym">Canis familiaris</name>
    <dbReference type="NCBI Taxonomy" id="9615"/>
    <lineage>
        <taxon>Eukaryota</taxon>
        <taxon>Metazoa</taxon>
        <taxon>Chordata</taxon>
        <taxon>Craniata</taxon>
        <taxon>Vertebrata</taxon>
        <taxon>Euteleostomi</taxon>
        <taxon>Mammalia</taxon>
        <taxon>Eutheria</taxon>
        <taxon>Laurasiatheria</taxon>
        <taxon>Carnivora</taxon>
        <taxon>Caniformia</taxon>
        <taxon>Canidae</taxon>
        <taxon>Canis</taxon>
    </lineage>
</organism>
<gene>
    <name type="primary">DEFB119</name>
    <name type="synonym">CBD119</name>
</gene>
<evidence type="ECO:0000250" key="1"/>
<evidence type="ECO:0000255" key="2"/>
<evidence type="ECO:0000305" key="3"/>
<reference key="1">
    <citation type="journal article" date="2005" name="Physiol. Genomics">
        <title>Cross-species analysis of the mammalian beta-defensin gene family: presence of syntenic gene clusters and preferential expression in the male reproductive tract.</title>
        <authorList>
            <person name="Patil A.A."/>
            <person name="Cai Y."/>
            <person name="Sang Y."/>
            <person name="Blecha F."/>
            <person name="Zhang G."/>
        </authorList>
    </citation>
    <scope>NUCLEOTIDE SEQUENCE [MRNA]</scope>
</reference>
<comment type="function">
    <text evidence="3">Has antibacterial activity.</text>
</comment>
<comment type="subcellular location">
    <subcellularLocation>
        <location evidence="3">Secreted</location>
    </subcellularLocation>
</comment>
<comment type="similarity">
    <text evidence="3">Belongs to the beta-defensin family.</text>
</comment>
<sequence length="82" mass="9726">MKFFLFFVILLAMEPVISGKHHILRCMGNTGICRPSCRKTEQPYLYCLNYQSCCLQSYMRISISGREEKDDWSQQNRWPKIS</sequence>